<name>YER7_SCHPO</name>
<reference key="1">
    <citation type="journal article" date="2002" name="Nature">
        <title>The genome sequence of Schizosaccharomyces pombe.</title>
        <authorList>
            <person name="Wood V."/>
            <person name="Gwilliam R."/>
            <person name="Rajandream M.A."/>
            <person name="Lyne M.H."/>
            <person name="Lyne R."/>
            <person name="Stewart A."/>
            <person name="Sgouros J.G."/>
            <person name="Peat N."/>
            <person name="Hayles J."/>
            <person name="Baker S.G."/>
            <person name="Basham D."/>
            <person name="Bowman S."/>
            <person name="Brooks K."/>
            <person name="Brown D."/>
            <person name="Brown S."/>
            <person name="Chillingworth T."/>
            <person name="Churcher C.M."/>
            <person name="Collins M."/>
            <person name="Connor R."/>
            <person name="Cronin A."/>
            <person name="Davis P."/>
            <person name="Feltwell T."/>
            <person name="Fraser A."/>
            <person name="Gentles S."/>
            <person name="Goble A."/>
            <person name="Hamlin N."/>
            <person name="Harris D.E."/>
            <person name="Hidalgo J."/>
            <person name="Hodgson G."/>
            <person name="Holroyd S."/>
            <person name="Hornsby T."/>
            <person name="Howarth S."/>
            <person name="Huckle E.J."/>
            <person name="Hunt S."/>
            <person name="Jagels K."/>
            <person name="James K.D."/>
            <person name="Jones L."/>
            <person name="Jones M."/>
            <person name="Leather S."/>
            <person name="McDonald S."/>
            <person name="McLean J."/>
            <person name="Mooney P."/>
            <person name="Moule S."/>
            <person name="Mungall K.L."/>
            <person name="Murphy L.D."/>
            <person name="Niblett D."/>
            <person name="Odell C."/>
            <person name="Oliver K."/>
            <person name="O'Neil S."/>
            <person name="Pearson D."/>
            <person name="Quail M.A."/>
            <person name="Rabbinowitsch E."/>
            <person name="Rutherford K.M."/>
            <person name="Rutter S."/>
            <person name="Saunders D."/>
            <person name="Seeger K."/>
            <person name="Sharp S."/>
            <person name="Skelton J."/>
            <person name="Simmonds M.N."/>
            <person name="Squares R."/>
            <person name="Squares S."/>
            <person name="Stevens K."/>
            <person name="Taylor K."/>
            <person name="Taylor R.G."/>
            <person name="Tivey A."/>
            <person name="Walsh S.V."/>
            <person name="Warren T."/>
            <person name="Whitehead S."/>
            <person name="Woodward J.R."/>
            <person name="Volckaert G."/>
            <person name="Aert R."/>
            <person name="Robben J."/>
            <person name="Grymonprez B."/>
            <person name="Weltjens I."/>
            <person name="Vanstreels E."/>
            <person name="Rieger M."/>
            <person name="Schaefer M."/>
            <person name="Mueller-Auer S."/>
            <person name="Gabel C."/>
            <person name="Fuchs M."/>
            <person name="Duesterhoeft A."/>
            <person name="Fritzc C."/>
            <person name="Holzer E."/>
            <person name="Moestl D."/>
            <person name="Hilbert H."/>
            <person name="Borzym K."/>
            <person name="Langer I."/>
            <person name="Beck A."/>
            <person name="Lehrach H."/>
            <person name="Reinhardt R."/>
            <person name="Pohl T.M."/>
            <person name="Eger P."/>
            <person name="Zimmermann W."/>
            <person name="Wedler H."/>
            <person name="Wambutt R."/>
            <person name="Purnelle B."/>
            <person name="Goffeau A."/>
            <person name="Cadieu E."/>
            <person name="Dreano S."/>
            <person name="Gloux S."/>
            <person name="Lelaure V."/>
            <person name="Mottier S."/>
            <person name="Galibert F."/>
            <person name="Aves S.J."/>
            <person name="Xiang Z."/>
            <person name="Hunt C."/>
            <person name="Moore K."/>
            <person name="Hurst S.M."/>
            <person name="Lucas M."/>
            <person name="Rochet M."/>
            <person name="Gaillardin C."/>
            <person name="Tallada V.A."/>
            <person name="Garzon A."/>
            <person name="Thode G."/>
            <person name="Daga R.R."/>
            <person name="Cruzado L."/>
            <person name="Jimenez J."/>
            <person name="Sanchez M."/>
            <person name="del Rey F."/>
            <person name="Benito J."/>
            <person name="Dominguez A."/>
            <person name="Revuelta J.L."/>
            <person name="Moreno S."/>
            <person name="Armstrong J."/>
            <person name="Forsburg S.L."/>
            <person name="Cerutti L."/>
            <person name="Lowe T."/>
            <person name="McCombie W.R."/>
            <person name="Paulsen I."/>
            <person name="Potashkin J."/>
            <person name="Shpakovski G.V."/>
            <person name="Ussery D."/>
            <person name="Barrell B.G."/>
            <person name="Nurse P."/>
        </authorList>
    </citation>
    <scope>NUCLEOTIDE SEQUENCE [LARGE SCALE GENOMIC DNA]</scope>
    <source>
        <strain>972 / ATCC 24843</strain>
    </source>
</reference>
<reference key="2">
    <citation type="journal article" date="2006" name="Nat. Biotechnol.">
        <title>ORFeome cloning and global analysis of protein localization in the fission yeast Schizosaccharomyces pombe.</title>
        <authorList>
            <person name="Matsuyama A."/>
            <person name="Arai R."/>
            <person name="Yashiroda Y."/>
            <person name="Shirai A."/>
            <person name="Kamata A."/>
            <person name="Sekido S."/>
            <person name="Kobayashi Y."/>
            <person name="Hashimoto A."/>
            <person name="Hamamoto M."/>
            <person name="Hiraoka Y."/>
            <person name="Horinouchi S."/>
            <person name="Yoshida M."/>
        </authorList>
    </citation>
    <scope>SUBCELLULAR LOCATION [LARGE SCALE ANALYSIS]</scope>
</reference>
<protein>
    <recommendedName>
        <fullName>Uncharacterized protein C2F3.07c</fullName>
    </recommendedName>
</protein>
<keyword id="KW-0256">Endoplasmic reticulum</keyword>
<keyword id="KW-0472">Membrane</keyword>
<keyword id="KW-1185">Reference proteome</keyword>
<keyword id="KW-0812">Transmembrane</keyword>
<keyword id="KW-1133">Transmembrane helix</keyword>
<gene>
    <name type="ORF">SPAC2F3.07c</name>
</gene>
<sequence>MLVRENNSNDRSIIEYVIKILLISGISRIIILILAMFESIRHIIFHNDTNPSDARKFQMAICRLSSQKSRKLKNPIESSTTSHKKKGYVRKCYECLQIQVS</sequence>
<feature type="chain" id="PRO_0000304052" description="Uncharacterized protein C2F3.07c">
    <location>
        <begin position="1"/>
        <end position="101"/>
    </location>
</feature>
<feature type="transmembrane region" description="Helical" evidence="1">
    <location>
        <begin position="17"/>
        <end position="37"/>
    </location>
</feature>
<accession>O14090</accession>
<evidence type="ECO:0000255" key="1"/>
<evidence type="ECO:0000269" key="2">
    <source>
    </source>
</evidence>
<organism>
    <name type="scientific">Schizosaccharomyces pombe (strain 972 / ATCC 24843)</name>
    <name type="common">Fission yeast</name>
    <dbReference type="NCBI Taxonomy" id="284812"/>
    <lineage>
        <taxon>Eukaryota</taxon>
        <taxon>Fungi</taxon>
        <taxon>Dikarya</taxon>
        <taxon>Ascomycota</taxon>
        <taxon>Taphrinomycotina</taxon>
        <taxon>Schizosaccharomycetes</taxon>
        <taxon>Schizosaccharomycetales</taxon>
        <taxon>Schizosaccharomycetaceae</taxon>
        <taxon>Schizosaccharomyces</taxon>
    </lineage>
</organism>
<proteinExistence type="predicted"/>
<comment type="subcellular location">
    <subcellularLocation>
        <location evidence="2">Endoplasmic reticulum membrane</location>
        <topology evidence="2">Single-pass membrane protein</topology>
    </subcellularLocation>
</comment>
<dbReference type="EMBL" id="CU329670">
    <property type="protein sequence ID" value="CAB16263.1"/>
    <property type="molecule type" value="Genomic_DNA"/>
</dbReference>
<dbReference type="PIR" id="T38540">
    <property type="entry name" value="T38540"/>
</dbReference>
<dbReference type="RefSeq" id="NP_594386.1">
    <property type="nucleotide sequence ID" value="NM_001019807.1"/>
</dbReference>
<dbReference type="BioGRID" id="278532">
    <property type="interactions" value="5"/>
</dbReference>
<dbReference type="PaxDb" id="4896-SPAC2F3.07c.1"/>
<dbReference type="EnsemblFungi" id="SPAC2F3.07c.1">
    <property type="protein sequence ID" value="SPAC2F3.07c.1:pep"/>
    <property type="gene ID" value="SPAC2F3.07c"/>
</dbReference>
<dbReference type="KEGG" id="spo:2542053"/>
<dbReference type="PomBase" id="SPAC2F3.07c"/>
<dbReference type="VEuPathDB" id="FungiDB:SPAC2F3.07c"/>
<dbReference type="HOGENOM" id="CLU_2293312_0_0_1"/>
<dbReference type="InParanoid" id="O14090"/>
<dbReference type="PRO" id="PR:O14090"/>
<dbReference type="Proteomes" id="UP000002485">
    <property type="component" value="Chromosome I"/>
</dbReference>
<dbReference type="GO" id="GO:0005789">
    <property type="term" value="C:endoplasmic reticulum membrane"/>
    <property type="evidence" value="ECO:0007669"/>
    <property type="project" value="UniProtKB-SubCell"/>
</dbReference>